<accession>A0A0M4FTF3</accession>
<sequence length="266" mass="29001">MAYSKILFCFMIGFVGFLPAITMATQYLVGDDRGWTLDFDYQTWAKNKTFKVGDTLAPPPSEGLTSGYDVITLTKPGKKWYICGVPTHCSDYNQKLVITVEDGAPAPAPASPAPQTEYWVGDDKGWTIDVDYQAWAKGKTFKVGDTLVFKYTKGHHNVFKVNQTGFQNCIAPPPSEGLTSGHDVITLAAPGKKWYICGFPTHCSEHKQKLAITVEGAPAQTPPVWAPAPAPGTPKKIDTGNSYKITSPYKMFVGGAVSIWTILTLV</sequence>
<comment type="subcellular location">
    <subcellularLocation>
        <location evidence="1">Membrane</location>
        <topology evidence="1">Single-pass type I membrane protein</topology>
    </subcellularLocation>
</comment>
<comment type="induction">
    <text evidence="4">Accumulates in roots, in a RAM1-dependent manner, during colonization by arbuscular mycorrhizal (AM) fungi (e.g. Rhizophagus irregularis); the expression level correlates tightly with AM development.</text>
</comment>
<proteinExistence type="evidence at transcript level"/>
<feature type="signal peptide" evidence="1">
    <location>
        <begin position="1"/>
        <end position="24"/>
    </location>
</feature>
<feature type="chain" id="PRO_0000450028" description="Blue copper protein">
    <location>
        <begin position="25"/>
        <end position="266"/>
    </location>
</feature>
<feature type="transmembrane region" description="Helical" evidence="1">
    <location>
        <begin position="245"/>
        <end position="265"/>
    </location>
</feature>
<feature type="domain" description="Phytocyanin 1" evidence="3">
    <location>
        <begin position="25"/>
        <end position="56"/>
    </location>
</feature>
<feature type="domain" description="Phytocyanin 2" evidence="3">
    <location>
        <begin position="57"/>
        <end position="102"/>
    </location>
</feature>
<feature type="domain" description="Phytocyanin 3" evidence="3">
    <location>
        <begin position="116"/>
        <end position="216"/>
    </location>
</feature>
<feature type="binding site" evidence="3">
    <location>
        <position position="156"/>
    </location>
    <ligand>
        <name>Cu cation</name>
        <dbReference type="ChEBI" id="CHEBI:23378"/>
    </ligand>
</feature>
<feature type="binding site" evidence="3">
    <location>
        <position position="197"/>
    </location>
    <ligand>
        <name>Cu cation</name>
        <dbReference type="ChEBI" id="CHEBI:23378"/>
    </ligand>
</feature>
<feature type="binding site" evidence="3">
    <location>
        <position position="202"/>
    </location>
    <ligand>
        <name>Cu cation</name>
        <dbReference type="ChEBI" id="CHEBI:23378"/>
    </ligand>
</feature>
<feature type="binding site" evidence="3">
    <location>
        <position position="208"/>
    </location>
    <ligand>
        <name>Cu cation</name>
        <dbReference type="ChEBI" id="CHEBI:23378"/>
    </ligand>
</feature>
<feature type="glycosylation site" description="N-linked (GlcNAc...) asparagine" evidence="2">
    <location>
        <position position="47"/>
    </location>
</feature>
<feature type="glycosylation site" description="N-linked (GlcNAc...) asparagine" evidence="2">
    <location>
        <position position="162"/>
    </location>
</feature>
<feature type="disulfide bond" evidence="3">
    <location>
        <begin position="169"/>
        <end position="203"/>
    </location>
</feature>
<gene>
    <name evidence="5" type="primary">BCP</name>
</gene>
<protein>
    <recommendedName>
        <fullName evidence="5">Blue copper protein</fullName>
        <shortName evidence="5">PhBcp</shortName>
    </recommendedName>
</protein>
<name>BCP_PETHY</name>
<keyword id="KW-0186">Copper</keyword>
<keyword id="KW-1015">Disulfide bond</keyword>
<keyword id="KW-0249">Electron transport</keyword>
<keyword id="KW-0325">Glycoprotein</keyword>
<keyword id="KW-0472">Membrane</keyword>
<keyword id="KW-0479">Metal-binding</keyword>
<keyword id="KW-0732">Signal</keyword>
<keyword id="KW-0812">Transmembrane</keyword>
<keyword id="KW-1133">Transmembrane helix</keyword>
<keyword id="KW-0813">Transport</keyword>
<dbReference type="EMBL" id="KR612268">
    <property type="protein sequence ID" value="ALC79558.1"/>
    <property type="molecule type" value="mRNA"/>
</dbReference>
<dbReference type="SMR" id="A0A0M4FTF3"/>
<dbReference type="GlyCosmos" id="A0A0M4FTF3">
    <property type="glycosylation" value="2 sites, No reported glycans"/>
</dbReference>
<dbReference type="GO" id="GO:0005886">
    <property type="term" value="C:plasma membrane"/>
    <property type="evidence" value="ECO:0007669"/>
    <property type="project" value="TreeGrafter"/>
</dbReference>
<dbReference type="GO" id="GO:0009055">
    <property type="term" value="F:electron transfer activity"/>
    <property type="evidence" value="ECO:0007669"/>
    <property type="project" value="InterPro"/>
</dbReference>
<dbReference type="GO" id="GO:0046872">
    <property type="term" value="F:metal ion binding"/>
    <property type="evidence" value="ECO:0007669"/>
    <property type="project" value="UniProtKB-KW"/>
</dbReference>
<dbReference type="GO" id="GO:0009610">
    <property type="term" value="P:response to symbiotic fungus"/>
    <property type="evidence" value="ECO:0000270"/>
    <property type="project" value="UniProtKB"/>
</dbReference>
<dbReference type="CDD" id="cd04216">
    <property type="entry name" value="Phytocyanin"/>
    <property type="match status" value="1"/>
</dbReference>
<dbReference type="FunFam" id="2.60.40.420:FF:000067">
    <property type="entry name" value="Cupredoxin superfamily protein"/>
    <property type="match status" value="1"/>
</dbReference>
<dbReference type="Gene3D" id="2.60.40.420">
    <property type="entry name" value="Cupredoxins - blue copper proteins"/>
    <property type="match status" value="3"/>
</dbReference>
<dbReference type="InterPro" id="IPR008972">
    <property type="entry name" value="Cupredoxin"/>
</dbReference>
<dbReference type="InterPro" id="IPR039391">
    <property type="entry name" value="Phytocyanin-like"/>
</dbReference>
<dbReference type="InterPro" id="IPR003245">
    <property type="entry name" value="Phytocyanin_dom"/>
</dbReference>
<dbReference type="PANTHER" id="PTHR33021">
    <property type="entry name" value="BLUE COPPER PROTEIN"/>
    <property type="match status" value="1"/>
</dbReference>
<dbReference type="PANTHER" id="PTHR33021:SF533">
    <property type="entry name" value="PHYTOCYANIN DOMAIN-CONTAINING PROTEIN"/>
    <property type="match status" value="1"/>
</dbReference>
<dbReference type="Pfam" id="PF02298">
    <property type="entry name" value="Cu_bind_like"/>
    <property type="match status" value="2"/>
</dbReference>
<dbReference type="SUPFAM" id="SSF49503">
    <property type="entry name" value="Cupredoxins"/>
    <property type="match status" value="2"/>
</dbReference>
<dbReference type="PROSITE" id="PS51485">
    <property type="entry name" value="PHYTOCYANIN"/>
    <property type="match status" value="1"/>
</dbReference>
<evidence type="ECO:0000255" key="1"/>
<evidence type="ECO:0000255" key="2">
    <source>
        <dbReference type="PROSITE-ProRule" id="PRU00498"/>
    </source>
</evidence>
<evidence type="ECO:0000255" key="3">
    <source>
        <dbReference type="PROSITE-ProRule" id="PRU00818"/>
    </source>
</evidence>
<evidence type="ECO:0000269" key="4">
    <source>
    </source>
</evidence>
<evidence type="ECO:0000303" key="5">
    <source>
    </source>
</evidence>
<reference key="1">
    <citation type="journal article" date="2015" name="Plant Physiol.">
        <title>The Petunia GRAS transcription factor ATA/RAM1 regulates symbiotic gene expression and fungal morphogenesis in arbuscular mycorrhiza.</title>
        <authorList>
            <person name="Rich M.K."/>
            <person name="Schorderet M."/>
            <person name="Bapaume L."/>
            <person name="Falquet L."/>
            <person name="Morel P."/>
            <person name="Vandenbussche M."/>
            <person name="Reinhardt D."/>
        </authorList>
    </citation>
    <scope>NUCLEOTIDE SEQUENCE [MRNA]</scope>
    <scope>INDUCTION BY RAM1 AND RHIZOPHAGUS IRREGULARIS</scope>
    <source>
        <strain>cv. W138</strain>
    </source>
</reference>
<organism>
    <name type="scientific">Petunia hybrida</name>
    <name type="common">Petunia</name>
    <dbReference type="NCBI Taxonomy" id="4102"/>
    <lineage>
        <taxon>Eukaryota</taxon>
        <taxon>Viridiplantae</taxon>
        <taxon>Streptophyta</taxon>
        <taxon>Embryophyta</taxon>
        <taxon>Tracheophyta</taxon>
        <taxon>Spermatophyta</taxon>
        <taxon>Magnoliopsida</taxon>
        <taxon>eudicotyledons</taxon>
        <taxon>Gunneridae</taxon>
        <taxon>Pentapetalae</taxon>
        <taxon>asterids</taxon>
        <taxon>lamiids</taxon>
        <taxon>Solanales</taxon>
        <taxon>Solanaceae</taxon>
        <taxon>Petunioideae</taxon>
        <taxon>Petunia</taxon>
    </lineage>
</organism>